<comment type="function">
    <text evidence="1">Required for the normal development of the forebrain, eyes and other anterior structures such as the olfactory placodes and pituitary gland. Possible transcriptional repressor. Binds to the palindromic PIII sequence, 5'-AGCTTGAGTCTAATTGAATTAACTGTAC-3'. HESX1 and PROP1 bind as heterodimers on this palindromic site, and, in vitro, HESX1 can antagonize PROP1 activation (By similarity).</text>
</comment>
<comment type="subunit">
    <text evidence="1">Can form heterodimers with PROP1 in binding to DNA. Interacts with TLE1 (By similarity).</text>
</comment>
<comment type="subcellular location">
    <subcellularLocation>
        <location evidence="2">Nucleus</location>
    </subcellularLocation>
</comment>
<comment type="similarity">
    <text evidence="3">Belongs to the ANF homeobox family.</text>
</comment>
<sequence length="185" mass="21382">MSPSLQEGAQLGESKPSTCSFSIERILGLDQKKDCVPLMKPHRPWADTCSSSGKDGNLCLHVPNPPSGISFPSVVDHPMPEERASKYENYFSASERLSLKRELSWYRGRRPRTAFTQNQIEVLENVFRVNCYPGIDIREDLAQKLNLEEDRIQIWFQNRRAKLKRSHRESQFLMAKKNFNTNLLE</sequence>
<accession>A1YGA2</accession>
<proteinExistence type="inferred from homology"/>
<dbReference type="EMBL" id="DQ977246">
    <property type="protein sequence ID" value="ABM54327.1"/>
    <property type="molecule type" value="Genomic_DNA"/>
</dbReference>
<dbReference type="RefSeq" id="XP_008970304.2">
    <property type="nucleotide sequence ID" value="XM_008972056.7"/>
</dbReference>
<dbReference type="SMR" id="A1YGA2"/>
<dbReference type="STRING" id="9597.ENSPPAP00000009017"/>
<dbReference type="GeneID" id="100967444"/>
<dbReference type="KEGG" id="pps:100967444"/>
<dbReference type="CTD" id="8820"/>
<dbReference type="eggNOG" id="KOG0490">
    <property type="taxonomic scope" value="Eukaryota"/>
</dbReference>
<dbReference type="Proteomes" id="UP000240080">
    <property type="component" value="Unplaced"/>
</dbReference>
<dbReference type="GO" id="GO:0005634">
    <property type="term" value="C:nucleus"/>
    <property type="evidence" value="ECO:0000250"/>
    <property type="project" value="UniProtKB"/>
</dbReference>
<dbReference type="GO" id="GO:0003677">
    <property type="term" value="F:DNA binding"/>
    <property type="evidence" value="ECO:0000250"/>
    <property type="project" value="UniProtKB"/>
</dbReference>
<dbReference type="GO" id="GO:0001227">
    <property type="term" value="F:DNA-binding transcription repressor activity, RNA polymerase II-specific"/>
    <property type="evidence" value="ECO:0007669"/>
    <property type="project" value="TreeGrafter"/>
</dbReference>
<dbReference type="GO" id="GO:0000978">
    <property type="term" value="F:RNA polymerase II cis-regulatory region sequence-specific DNA binding"/>
    <property type="evidence" value="ECO:0000250"/>
    <property type="project" value="UniProtKB"/>
</dbReference>
<dbReference type="GO" id="GO:0021983">
    <property type="term" value="P:pituitary gland development"/>
    <property type="evidence" value="ECO:0000250"/>
    <property type="project" value="UniProtKB"/>
</dbReference>
<dbReference type="CDD" id="cd00086">
    <property type="entry name" value="homeodomain"/>
    <property type="match status" value="1"/>
</dbReference>
<dbReference type="FunFam" id="1.10.10.60:FF:000214">
    <property type="entry name" value="Homeobox expressed in ES cells 1"/>
    <property type="match status" value="1"/>
</dbReference>
<dbReference type="Gene3D" id="1.10.10.60">
    <property type="entry name" value="Homeodomain-like"/>
    <property type="match status" value="1"/>
</dbReference>
<dbReference type="InterPro" id="IPR001356">
    <property type="entry name" value="HD"/>
</dbReference>
<dbReference type="InterPro" id="IPR043402">
    <property type="entry name" value="Hesx1"/>
</dbReference>
<dbReference type="InterPro" id="IPR017970">
    <property type="entry name" value="Homeobox_CS"/>
</dbReference>
<dbReference type="InterPro" id="IPR009057">
    <property type="entry name" value="Homeodomain-like_sf"/>
</dbReference>
<dbReference type="PANTHER" id="PTHR46966">
    <property type="entry name" value="HOMEOBOX EXPRESSED IN ES CELLS 1"/>
    <property type="match status" value="1"/>
</dbReference>
<dbReference type="PANTHER" id="PTHR46966:SF1">
    <property type="entry name" value="HOMEOBOX EXPRESSED IN ES CELLS 1"/>
    <property type="match status" value="1"/>
</dbReference>
<dbReference type="Pfam" id="PF00046">
    <property type="entry name" value="Homeodomain"/>
    <property type="match status" value="1"/>
</dbReference>
<dbReference type="SMART" id="SM00389">
    <property type="entry name" value="HOX"/>
    <property type="match status" value="1"/>
</dbReference>
<dbReference type="SUPFAM" id="SSF46689">
    <property type="entry name" value="Homeodomain-like"/>
    <property type="match status" value="1"/>
</dbReference>
<dbReference type="PROSITE" id="PS00027">
    <property type="entry name" value="HOMEOBOX_1"/>
    <property type="match status" value="1"/>
</dbReference>
<dbReference type="PROSITE" id="PS50071">
    <property type="entry name" value="HOMEOBOX_2"/>
    <property type="match status" value="1"/>
</dbReference>
<protein>
    <recommendedName>
        <fullName>Homeobox expressed in ES cells 1</fullName>
    </recommendedName>
</protein>
<evidence type="ECO:0000250" key="1"/>
<evidence type="ECO:0000255" key="2">
    <source>
        <dbReference type="PROSITE-ProRule" id="PRU00108"/>
    </source>
</evidence>
<evidence type="ECO:0000305" key="3"/>
<organism>
    <name type="scientific">Pan paniscus</name>
    <name type="common">Pygmy chimpanzee</name>
    <name type="synonym">Bonobo</name>
    <dbReference type="NCBI Taxonomy" id="9597"/>
    <lineage>
        <taxon>Eukaryota</taxon>
        <taxon>Metazoa</taxon>
        <taxon>Chordata</taxon>
        <taxon>Craniata</taxon>
        <taxon>Vertebrata</taxon>
        <taxon>Euteleostomi</taxon>
        <taxon>Mammalia</taxon>
        <taxon>Eutheria</taxon>
        <taxon>Euarchontoglires</taxon>
        <taxon>Primates</taxon>
        <taxon>Haplorrhini</taxon>
        <taxon>Catarrhini</taxon>
        <taxon>Hominidae</taxon>
        <taxon>Pan</taxon>
    </lineage>
</organism>
<gene>
    <name type="primary">HESX1</name>
</gene>
<name>HESX1_PANPA</name>
<feature type="chain" id="PRO_0000285447" description="Homeobox expressed in ES cells 1">
    <location>
        <begin position="1"/>
        <end position="185"/>
    </location>
</feature>
<feature type="DNA-binding region" description="Homeobox" evidence="2">
    <location>
        <begin position="108"/>
        <end position="167"/>
    </location>
</feature>
<keyword id="KW-0217">Developmental protein</keyword>
<keyword id="KW-0238">DNA-binding</keyword>
<keyword id="KW-0371">Homeobox</keyword>
<keyword id="KW-0539">Nucleus</keyword>
<keyword id="KW-1185">Reference proteome</keyword>
<keyword id="KW-0804">Transcription</keyword>
<keyword id="KW-0805">Transcription regulation</keyword>
<reference key="1">
    <citation type="submission" date="2006-08" db="EMBL/GenBank/DDBJ databases">
        <title>Positive selection in transcription factor genes on the human lineage.</title>
        <authorList>
            <person name="Nickel G.C."/>
            <person name="Tefft D.L."/>
            <person name="Trevarthen K."/>
            <person name="Funt J."/>
            <person name="Adams M.D."/>
        </authorList>
    </citation>
    <scope>NUCLEOTIDE SEQUENCE [GENOMIC DNA]</scope>
</reference>